<evidence type="ECO:0000255" key="1">
    <source>
        <dbReference type="HAMAP-Rule" id="MF_01217"/>
    </source>
</evidence>
<evidence type="ECO:0000255" key="2">
    <source>
        <dbReference type="PROSITE-ProRule" id="PRU00258"/>
    </source>
</evidence>
<keyword id="KW-0963">Cytoplasm</keyword>
<keyword id="KW-0275">Fatty acid biosynthesis</keyword>
<keyword id="KW-0276">Fatty acid metabolism</keyword>
<keyword id="KW-0444">Lipid biosynthesis</keyword>
<keyword id="KW-0443">Lipid metabolism</keyword>
<keyword id="KW-0596">Phosphopantetheine</keyword>
<keyword id="KW-0597">Phosphoprotein</keyword>
<keyword id="KW-1185">Reference proteome</keyword>
<sequence length="76" mass="8584">MSIEERVKKIIVEQLGVKEDEVKPEASFVEDLGADSLDTVELVMALEEEFDIEIPDEEAEKITTVQSAIDYVQNNQ</sequence>
<gene>
    <name evidence="1" type="primary">acpP</name>
    <name type="ordered locus">PM1917</name>
</gene>
<protein>
    <recommendedName>
        <fullName evidence="1">Acyl carrier protein</fullName>
        <shortName evidence="1">ACP</shortName>
    </recommendedName>
</protein>
<name>ACP_PASMU</name>
<organism>
    <name type="scientific">Pasteurella multocida (strain Pm70)</name>
    <dbReference type="NCBI Taxonomy" id="272843"/>
    <lineage>
        <taxon>Bacteria</taxon>
        <taxon>Pseudomonadati</taxon>
        <taxon>Pseudomonadota</taxon>
        <taxon>Gammaproteobacteria</taxon>
        <taxon>Pasteurellales</taxon>
        <taxon>Pasteurellaceae</taxon>
        <taxon>Pasteurella</taxon>
    </lineage>
</organism>
<reference key="1">
    <citation type="journal article" date="2001" name="Proc. Natl. Acad. Sci. U.S.A.">
        <title>Complete genomic sequence of Pasteurella multocida Pm70.</title>
        <authorList>
            <person name="May B.J."/>
            <person name="Zhang Q."/>
            <person name="Li L.L."/>
            <person name="Paustian M.L."/>
            <person name="Whittam T.S."/>
            <person name="Kapur V."/>
        </authorList>
    </citation>
    <scope>NUCLEOTIDE SEQUENCE [LARGE SCALE GENOMIC DNA]</scope>
    <source>
        <strain>Pm70</strain>
    </source>
</reference>
<feature type="chain" id="PRO_0000180162" description="Acyl carrier protein">
    <location>
        <begin position="1"/>
        <end position="76"/>
    </location>
</feature>
<feature type="domain" description="Carrier" evidence="2">
    <location>
        <begin position="1"/>
        <end position="76"/>
    </location>
</feature>
<feature type="modified residue" description="O-(pantetheine 4'-phosphoryl)serine" evidence="2">
    <location>
        <position position="36"/>
    </location>
</feature>
<dbReference type="EMBL" id="AE004439">
    <property type="protein sequence ID" value="AAK04001.1"/>
    <property type="molecule type" value="Genomic_DNA"/>
</dbReference>
<dbReference type="RefSeq" id="WP_005725021.1">
    <property type="nucleotide sequence ID" value="NC_002663.1"/>
</dbReference>
<dbReference type="SMR" id="Q9CJS5"/>
<dbReference type="STRING" id="272843.PM1917"/>
<dbReference type="EnsemblBacteria" id="AAK04001">
    <property type="protein sequence ID" value="AAK04001"/>
    <property type="gene ID" value="PM1917"/>
</dbReference>
<dbReference type="GeneID" id="77207261"/>
<dbReference type="KEGG" id="pmu:PM1917"/>
<dbReference type="HOGENOM" id="CLU_108696_5_1_6"/>
<dbReference type="OrthoDB" id="9804551at2"/>
<dbReference type="UniPathway" id="UPA00094"/>
<dbReference type="Proteomes" id="UP000000809">
    <property type="component" value="Chromosome"/>
</dbReference>
<dbReference type="GO" id="GO:0005829">
    <property type="term" value="C:cytosol"/>
    <property type="evidence" value="ECO:0007669"/>
    <property type="project" value="TreeGrafter"/>
</dbReference>
<dbReference type="GO" id="GO:0016020">
    <property type="term" value="C:membrane"/>
    <property type="evidence" value="ECO:0007669"/>
    <property type="project" value="GOC"/>
</dbReference>
<dbReference type="GO" id="GO:0000035">
    <property type="term" value="F:acyl binding"/>
    <property type="evidence" value="ECO:0007669"/>
    <property type="project" value="TreeGrafter"/>
</dbReference>
<dbReference type="GO" id="GO:0000036">
    <property type="term" value="F:acyl carrier activity"/>
    <property type="evidence" value="ECO:0007669"/>
    <property type="project" value="UniProtKB-UniRule"/>
</dbReference>
<dbReference type="GO" id="GO:0009245">
    <property type="term" value="P:lipid A biosynthetic process"/>
    <property type="evidence" value="ECO:0007669"/>
    <property type="project" value="TreeGrafter"/>
</dbReference>
<dbReference type="FunFam" id="1.10.1200.10:FF:000001">
    <property type="entry name" value="Acyl carrier protein"/>
    <property type="match status" value="1"/>
</dbReference>
<dbReference type="Gene3D" id="1.10.1200.10">
    <property type="entry name" value="ACP-like"/>
    <property type="match status" value="1"/>
</dbReference>
<dbReference type="HAMAP" id="MF_01217">
    <property type="entry name" value="Acyl_carrier"/>
    <property type="match status" value="1"/>
</dbReference>
<dbReference type="InterPro" id="IPR003231">
    <property type="entry name" value="ACP"/>
</dbReference>
<dbReference type="InterPro" id="IPR036736">
    <property type="entry name" value="ACP-like_sf"/>
</dbReference>
<dbReference type="InterPro" id="IPR009081">
    <property type="entry name" value="PP-bd_ACP"/>
</dbReference>
<dbReference type="InterPro" id="IPR006162">
    <property type="entry name" value="Ppantetheine_attach_site"/>
</dbReference>
<dbReference type="NCBIfam" id="TIGR00517">
    <property type="entry name" value="acyl_carrier"/>
    <property type="match status" value="1"/>
</dbReference>
<dbReference type="NCBIfam" id="NF002148">
    <property type="entry name" value="PRK00982.1-2"/>
    <property type="match status" value="1"/>
</dbReference>
<dbReference type="NCBIfam" id="NF002149">
    <property type="entry name" value="PRK00982.1-3"/>
    <property type="match status" value="1"/>
</dbReference>
<dbReference type="NCBIfam" id="NF002150">
    <property type="entry name" value="PRK00982.1-4"/>
    <property type="match status" value="1"/>
</dbReference>
<dbReference type="NCBIfam" id="NF002151">
    <property type="entry name" value="PRK00982.1-5"/>
    <property type="match status" value="1"/>
</dbReference>
<dbReference type="PANTHER" id="PTHR20863">
    <property type="entry name" value="ACYL CARRIER PROTEIN"/>
    <property type="match status" value="1"/>
</dbReference>
<dbReference type="PANTHER" id="PTHR20863:SF76">
    <property type="entry name" value="CARRIER DOMAIN-CONTAINING PROTEIN"/>
    <property type="match status" value="1"/>
</dbReference>
<dbReference type="Pfam" id="PF00550">
    <property type="entry name" value="PP-binding"/>
    <property type="match status" value="1"/>
</dbReference>
<dbReference type="SUPFAM" id="SSF47336">
    <property type="entry name" value="ACP-like"/>
    <property type="match status" value="1"/>
</dbReference>
<dbReference type="PROSITE" id="PS50075">
    <property type="entry name" value="CARRIER"/>
    <property type="match status" value="1"/>
</dbReference>
<dbReference type="PROSITE" id="PS00012">
    <property type="entry name" value="PHOSPHOPANTETHEINE"/>
    <property type="match status" value="1"/>
</dbReference>
<comment type="function">
    <text evidence="1">Carrier of the growing fatty acid chain in fatty acid biosynthesis.</text>
</comment>
<comment type="pathway">
    <text evidence="1">Lipid metabolism; fatty acid biosynthesis.</text>
</comment>
<comment type="subcellular location">
    <subcellularLocation>
        <location evidence="1">Cytoplasm</location>
    </subcellularLocation>
</comment>
<comment type="PTM">
    <text evidence="1">4'-phosphopantetheine is transferred from CoA to a specific serine of apo-ACP by AcpS. This modification is essential for activity because fatty acids are bound in thioester linkage to the sulfhydryl of the prosthetic group.</text>
</comment>
<comment type="similarity">
    <text evidence="1">Belongs to the acyl carrier protein (ACP) family.</text>
</comment>
<accession>Q9CJS5</accession>
<proteinExistence type="inferred from homology"/>